<gene>
    <name evidence="1" type="primary">nuoA2</name>
    <name type="ordered locus">PA14_40160</name>
</gene>
<evidence type="ECO:0000255" key="1">
    <source>
        <dbReference type="HAMAP-Rule" id="MF_01394"/>
    </source>
</evidence>
<comment type="function">
    <text evidence="1">NDH-1 shuttles electrons from NADH, via FMN and iron-sulfur (Fe-S) centers, to quinones in the respiratory chain. The immediate electron acceptor for the enzyme in this species is believed to be ubiquinone. Couples the redox reaction to proton translocation (for every two electrons transferred, four hydrogen ions are translocated across the cytoplasmic membrane), and thus conserves the redox energy in a proton gradient.</text>
</comment>
<comment type="catalytic activity">
    <reaction evidence="1">
        <text>a quinone + NADH + 5 H(+)(in) = a quinol + NAD(+) + 4 H(+)(out)</text>
        <dbReference type="Rhea" id="RHEA:57888"/>
        <dbReference type="ChEBI" id="CHEBI:15378"/>
        <dbReference type="ChEBI" id="CHEBI:24646"/>
        <dbReference type="ChEBI" id="CHEBI:57540"/>
        <dbReference type="ChEBI" id="CHEBI:57945"/>
        <dbReference type="ChEBI" id="CHEBI:132124"/>
    </reaction>
</comment>
<comment type="subunit">
    <text evidence="1">NDH-1 is composed of 13 different subunits. Subunits NuoA, H, J, K, L, M, N constitute the membrane sector of the complex.</text>
</comment>
<comment type="subcellular location">
    <subcellularLocation>
        <location evidence="1">Cell inner membrane</location>
        <topology evidence="1">Multi-pass membrane protein</topology>
    </subcellularLocation>
</comment>
<comment type="similarity">
    <text evidence="1">Belongs to the complex I subunit 3 family.</text>
</comment>
<reference key="1">
    <citation type="journal article" date="2006" name="Genome Biol.">
        <title>Genomic analysis reveals that Pseudomonas aeruginosa virulence is combinatorial.</title>
        <authorList>
            <person name="Lee D.G."/>
            <person name="Urbach J.M."/>
            <person name="Wu G."/>
            <person name="Liberati N.T."/>
            <person name="Feinbaum R.L."/>
            <person name="Miyata S."/>
            <person name="Diggins L.T."/>
            <person name="He J."/>
            <person name="Saucier M."/>
            <person name="Deziel E."/>
            <person name="Friedman L."/>
            <person name="Li L."/>
            <person name="Grills G."/>
            <person name="Montgomery K."/>
            <person name="Kucherlapati R."/>
            <person name="Rahme L.G."/>
            <person name="Ausubel F.M."/>
        </authorList>
    </citation>
    <scope>NUCLEOTIDE SEQUENCE [LARGE SCALE GENOMIC DNA]</scope>
    <source>
        <strain>UCBPP-PA14</strain>
    </source>
</reference>
<proteinExistence type="inferred from homology"/>
<dbReference type="EC" id="7.1.1.-" evidence="1"/>
<dbReference type="EMBL" id="CP000438">
    <property type="protein sequence ID" value="ABJ11073.1"/>
    <property type="molecule type" value="Genomic_DNA"/>
</dbReference>
<dbReference type="SMR" id="Q02L30"/>
<dbReference type="KEGG" id="pau:PA14_40160"/>
<dbReference type="PseudoCAP" id="PA14_40160"/>
<dbReference type="HOGENOM" id="CLU_119549_2_1_6"/>
<dbReference type="BioCyc" id="PAER208963:G1G74-3366-MONOMER"/>
<dbReference type="Proteomes" id="UP000000653">
    <property type="component" value="Chromosome"/>
</dbReference>
<dbReference type="GO" id="GO:0030964">
    <property type="term" value="C:NADH dehydrogenase complex"/>
    <property type="evidence" value="ECO:0007669"/>
    <property type="project" value="TreeGrafter"/>
</dbReference>
<dbReference type="GO" id="GO:0005886">
    <property type="term" value="C:plasma membrane"/>
    <property type="evidence" value="ECO:0007669"/>
    <property type="project" value="UniProtKB-SubCell"/>
</dbReference>
<dbReference type="GO" id="GO:0008137">
    <property type="term" value="F:NADH dehydrogenase (ubiquinone) activity"/>
    <property type="evidence" value="ECO:0007669"/>
    <property type="project" value="InterPro"/>
</dbReference>
<dbReference type="GO" id="GO:0050136">
    <property type="term" value="F:NADH:ubiquinone reductase (non-electrogenic) activity"/>
    <property type="evidence" value="ECO:0007669"/>
    <property type="project" value="UniProtKB-UniRule"/>
</dbReference>
<dbReference type="GO" id="GO:0048038">
    <property type="term" value="F:quinone binding"/>
    <property type="evidence" value="ECO:0007669"/>
    <property type="project" value="UniProtKB-KW"/>
</dbReference>
<dbReference type="FunFam" id="1.20.58.1610:FF:000003">
    <property type="entry name" value="NADH-quinone oxidoreductase subunit A"/>
    <property type="match status" value="1"/>
</dbReference>
<dbReference type="Gene3D" id="1.20.58.1610">
    <property type="entry name" value="NADH:ubiquinone/plastoquinone oxidoreductase, chain 3"/>
    <property type="match status" value="1"/>
</dbReference>
<dbReference type="HAMAP" id="MF_01394">
    <property type="entry name" value="NDH1_NuoA"/>
    <property type="match status" value="1"/>
</dbReference>
<dbReference type="InterPro" id="IPR023043">
    <property type="entry name" value="NAD(P)H_OxRDtase_bac/plastid"/>
</dbReference>
<dbReference type="InterPro" id="IPR000440">
    <property type="entry name" value="NADH_UbQ/plastoQ_OxRdtase_su3"/>
</dbReference>
<dbReference type="InterPro" id="IPR038430">
    <property type="entry name" value="NDAH_ubi_oxred_su3_sf"/>
</dbReference>
<dbReference type="PANTHER" id="PTHR11058:SF21">
    <property type="entry name" value="NADH-QUINONE OXIDOREDUCTASE SUBUNIT A"/>
    <property type="match status" value="1"/>
</dbReference>
<dbReference type="PANTHER" id="PTHR11058">
    <property type="entry name" value="NADH-UBIQUINONE OXIDOREDUCTASE CHAIN 3"/>
    <property type="match status" value="1"/>
</dbReference>
<dbReference type="Pfam" id="PF00507">
    <property type="entry name" value="Oxidored_q4"/>
    <property type="match status" value="1"/>
</dbReference>
<name>NUOA2_PSEAB</name>
<feature type="chain" id="PRO_0000362737" description="NADH-quinone oxidoreductase subunit A 2">
    <location>
        <begin position="1"/>
        <end position="132"/>
    </location>
</feature>
<feature type="transmembrane region" description="Helical" evidence="1">
    <location>
        <begin position="10"/>
        <end position="30"/>
    </location>
</feature>
<feature type="transmembrane region" description="Helical" evidence="1">
    <location>
        <begin position="66"/>
        <end position="86"/>
    </location>
</feature>
<feature type="transmembrane region" description="Helical" evidence="1">
    <location>
        <begin position="93"/>
        <end position="113"/>
    </location>
</feature>
<organism>
    <name type="scientific">Pseudomonas aeruginosa (strain UCBPP-PA14)</name>
    <dbReference type="NCBI Taxonomy" id="208963"/>
    <lineage>
        <taxon>Bacteria</taxon>
        <taxon>Pseudomonadati</taxon>
        <taxon>Pseudomonadota</taxon>
        <taxon>Gammaproteobacteria</taxon>
        <taxon>Pseudomonadales</taxon>
        <taxon>Pseudomonadaceae</taxon>
        <taxon>Pseudomonas</taxon>
    </lineage>
</organism>
<sequence length="132" mass="14713">MYASFAPATWALLAYLFGALALCLLMLGLGRVLGGRSHGRAKNLPFESGVDSTGSSRLRFSVKYALVAMLFVIFGIEMPFLYLWAVSLRENGWAGFVEATLFVSLLLVGLFYLHRVGALDWSPERRRKKPHD</sequence>
<protein>
    <recommendedName>
        <fullName evidence="1">NADH-quinone oxidoreductase subunit A 2</fullName>
        <ecNumber evidence="1">7.1.1.-</ecNumber>
    </recommendedName>
    <alternativeName>
        <fullName evidence="1">NADH dehydrogenase I subunit A 2</fullName>
    </alternativeName>
    <alternativeName>
        <fullName evidence="1">NDH-1 subunit A 2</fullName>
    </alternativeName>
    <alternativeName>
        <fullName evidence="1">NUO1 2</fullName>
    </alternativeName>
</protein>
<accession>Q02L30</accession>
<keyword id="KW-0997">Cell inner membrane</keyword>
<keyword id="KW-1003">Cell membrane</keyword>
<keyword id="KW-0472">Membrane</keyword>
<keyword id="KW-0520">NAD</keyword>
<keyword id="KW-0874">Quinone</keyword>
<keyword id="KW-1278">Translocase</keyword>
<keyword id="KW-0812">Transmembrane</keyword>
<keyword id="KW-1133">Transmembrane helix</keyword>
<keyword id="KW-0813">Transport</keyword>
<keyword id="KW-0830">Ubiquinone</keyword>